<accession>B1KKN8</accession>
<keyword id="KW-0413">Isomerase</keyword>
<keyword id="KW-1185">Reference proteome</keyword>
<keyword id="KW-0819">tRNA processing</keyword>
<proteinExistence type="inferred from homology"/>
<protein>
    <recommendedName>
        <fullName evidence="1">tRNA pseudouridine synthase A</fullName>
        <ecNumber evidence="1">5.4.99.12</ecNumber>
    </recommendedName>
    <alternativeName>
        <fullName evidence="1">tRNA pseudouridine(38-40) synthase</fullName>
    </alternativeName>
    <alternativeName>
        <fullName evidence="1">tRNA pseudouridylate synthase I</fullName>
    </alternativeName>
    <alternativeName>
        <fullName evidence="1">tRNA-uridine isomerase I</fullName>
    </alternativeName>
</protein>
<sequence>MRVALGIEYDGSKYFGWQRQVEVDSVQAQLERALSKVANEPISVHCAGRTDTGVHATGQVVHFDTDAIRKESAWTLGVNVSLPDDIAVRWAKVVDEDFHARFSATARRYRYMIYNYQLRPGILRSGVSHYRTHLDENKMHEAAQHFVGEHDFTSFRALHCQSKSPNRNVHEVNVTRQGMYICVDIKANAFLHHMVRNIVGSLIEIGLGHQSHEWIPELLALKDRSKAAPTAKPNGLYMVDVTYPEHFQLPKLALGPLFMLD</sequence>
<comment type="function">
    <text evidence="1">Formation of pseudouridine at positions 38, 39 and 40 in the anticodon stem and loop of transfer RNAs.</text>
</comment>
<comment type="catalytic activity">
    <reaction evidence="1">
        <text>uridine(38/39/40) in tRNA = pseudouridine(38/39/40) in tRNA</text>
        <dbReference type="Rhea" id="RHEA:22376"/>
        <dbReference type="Rhea" id="RHEA-COMP:10085"/>
        <dbReference type="Rhea" id="RHEA-COMP:10087"/>
        <dbReference type="ChEBI" id="CHEBI:65314"/>
        <dbReference type="ChEBI" id="CHEBI:65315"/>
        <dbReference type="EC" id="5.4.99.12"/>
    </reaction>
</comment>
<comment type="subunit">
    <text evidence="1">Homodimer.</text>
</comment>
<comment type="similarity">
    <text evidence="1">Belongs to the tRNA pseudouridine synthase TruA family.</text>
</comment>
<dbReference type="EC" id="5.4.99.12" evidence="1"/>
<dbReference type="EMBL" id="CP000961">
    <property type="protein sequence ID" value="ACA87255.1"/>
    <property type="molecule type" value="Genomic_DNA"/>
</dbReference>
<dbReference type="RefSeq" id="WP_012325591.1">
    <property type="nucleotide sequence ID" value="NC_010506.1"/>
</dbReference>
<dbReference type="SMR" id="B1KKN8"/>
<dbReference type="STRING" id="392500.Swoo_2984"/>
<dbReference type="KEGG" id="swd:Swoo_2984"/>
<dbReference type="eggNOG" id="COG0101">
    <property type="taxonomic scope" value="Bacteria"/>
</dbReference>
<dbReference type="HOGENOM" id="CLU_014673_0_2_6"/>
<dbReference type="Proteomes" id="UP000002168">
    <property type="component" value="Chromosome"/>
</dbReference>
<dbReference type="GO" id="GO:0003723">
    <property type="term" value="F:RNA binding"/>
    <property type="evidence" value="ECO:0007669"/>
    <property type="project" value="InterPro"/>
</dbReference>
<dbReference type="GO" id="GO:0160147">
    <property type="term" value="F:tRNA pseudouridine(38-40) synthase activity"/>
    <property type="evidence" value="ECO:0007669"/>
    <property type="project" value="UniProtKB-EC"/>
</dbReference>
<dbReference type="GO" id="GO:0031119">
    <property type="term" value="P:tRNA pseudouridine synthesis"/>
    <property type="evidence" value="ECO:0007669"/>
    <property type="project" value="UniProtKB-UniRule"/>
</dbReference>
<dbReference type="CDD" id="cd02570">
    <property type="entry name" value="PseudoU_synth_EcTruA"/>
    <property type="match status" value="1"/>
</dbReference>
<dbReference type="FunFam" id="3.30.70.580:FF:000001">
    <property type="entry name" value="tRNA pseudouridine synthase A"/>
    <property type="match status" value="1"/>
</dbReference>
<dbReference type="FunFam" id="3.30.70.660:FF:000001">
    <property type="entry name" value="tRNA pseudouridine synthase A"/>
    <property type="match status" value="1"/>
</dbReference>
<dbReference type="Gene3D" id="3.30.70.660">
    <property type="entry name" value="Pseudouridine synthase I, catalytic domain, C-terminal subdomain"/>
    <property type="match status" value="1"/>
</dbReference>
<dbReference type="Gene3D" id="3.30.70.580">
    <property type="entry name" value="Pseudouridine synthase I, catalytic domain, N-terminal subdomain"/>
    <property type="match status" value="1"/>
</dbReference>
<dbReference type="HAMAP" id="MF_00171">
    <property type="entry name" value="TruA"/>
    <property type="match status" value="1"/>
</dbReference>
<dbReference type="InterPro" id="IPR020103">
    <property type="entry name" value="PsdUridine_synth_cat_dom_sf"/>
</dbReference>
<dbReference type="InterPro" id="IPR001406">
    <property type="entry name" value="PsdUridine_synth_TruA"/>
</dbReference>
<dbReference type="InterPro" id="IPR020097">
    <property type="entry name" value="PsdUridine_synth_TruA_a/b_dom"/>
</dbReference>
<dbReference type="InterPro" id="IPR020095">
    <property type="entry name" value="PsdUridine_synth_TruA_C"/>
</dbReference>
<dbReference type="InterPro" id="IPR020094">
    <property type="entry name" value="TruA/RsuA/RluB/E/F_N"/>
</dbReference>
<dbReference type="NCBIfam" id="TIGR00071">
    <property type="entry name" value="hisT_truA"/>
    <property type="match status" value="1"/>
</dbReference>
<dbReference type="PANTHER" id="PTHR11142">
    <property type="entry name" value="PSEUDOURIDYLATE SYNTHASE"/>
    <property type="match status" value="1"/>
</dbReference>
<dbReference type="PANTHER" id="PTHR11142:SF0">
    <property type="entry name" value="TRNA PSEUDOURIDINE SYNTHASE-LIKE 1"/>
    <property type="match status" value="1"/>
</dbReference>
<dbReference type="Pfam" id="PF01416">
    <property type="entry name" value="PseudoU_synth_1"/>
    <property type="match status" value="2"/>
</dbReference>
<dbReference type="PIRSF" id="PIRSF001430">
    <property type="entry name" value="tRNA_psdUrid_synth"/>
    <property type="match status" value="1"/>
</dbReference>
<dbReference type="SUPFAM" id="SSF55120">
    <property type="entry name" value="Pseudouridine synthase"/>
    <property type="match status" value="1"/>
</dbReference>
<name>TRUA_SHEWM</name>
<organism>
    <name type="scientific">Shewanella woodyi (strain ATCC 51908 / MS32)</name>
    <dbReference type="NCBI Taxonomy" id="392500"/>
    <lineage>
        <taxon>Bacteria</taxon>
        <taxon>Pseudomonadati</taxon>
        <taxon>Pseudomonadota</taxon>
        <taxon>Gammaproteobacteria</taxon>
        <taxon>Alteromonadales</taxon>
        <taxon>Shewanellaceae</taxon>
        <taxon>Shewanella</taxon>
    </lineage>
</organism>
<feature type="chain" id="PRO_1000097785" description="tRNA pseudouridine synthase A">
    <location>
        <begin position="1"/>
        <end position="261"/>
    </location>
</feature>
<feature type="active site" description="Nucleophile" evidence="1">
    <location>
        <position position="51"/>
    </location>
</feature>
<feature type="binding site" evidence="1">
    <location>
        <position position="109"/>
    </location>
    <ligand>
        <name>substrate</name>
    </ligand>
</feature>
<evidence type="ECO:0000255" key="1">
    <source>
        <dbReference type="HAMAP-Rule" id="MF_00171"/>
    </source>
</evidence>
<reference key="1">
    <citation type="submission" date="2008-02" db="EMBL/GenBank/DDBJ databases">
        <title>Complete sequence of Shewanella woodyi ATCC 51908.</title>
        <authorList>
            <consortium name="US DOE Joint Genome Institute"/>
            <person name="Copeland A."/>
            <person name="Lucas S."/>
            <person name="Lapidus A."/>
            <person name="Glavina del Rio T."/>
            <person name="Dalin E."/>
            <person name="Tice H."/>
            <person name="Bruce D."/>
            <person name="Goodwin L."/>
            <person name="Pitluck S."/>
            <person name="Sims D."/>
            <person name="Brettin T."/>
            <person name="Detter J.C."/>
            <person name="Han C."/>
            <person name="Kuske C.R."/>
            <person name="Schmutz J."/>
            <person name="Larimer F."/>
            <person name="Land M."/>
            <person name="Hauser L."/>
            <person name="Kyrpides N."/>
            <person name="Lykidis A."/>
            <person name="Zhao J.-S."/>
            <person name="Richardson P."/>
        </authorList>
    </citation>
    <scope>NUCLEOTIDE SEQUENCE [LARGE SCALE GENOMIC DNA]</scope>
    <source>
        <strain>ATCC 51908 / MS32</strain>
    </source>
</reference>
<gene>
    <name evidence="1" type="primary">truA</name>
    <name type="ordered locus">Swoo_2984</name>
</gene>